<sequence>MRKEECFYLGKIAKKFSFKGEVLIYLDTDEPELYENLESVFVEHNKHLVPFFIETSSLHKGDFLRVRFEDVNTEEDADAIVGNSIYLPLTMLPKLTGNKFYFHEVIGFEIEDKRLGVFGKITSINDSSAQPLFEVLNGEVEILVPMIDHFLVKIDRENKKVIMDLPVGLVEMYL</sequence>
<accession>A5FKD8</accession>
<comment type="function">
    <text evidence="1">An accessory protein needed during the final step in the assembly of 30S ribosomal subunit, possibly for assembly of the head region. Essential for efficient processing of 16S rRNA. May be needed both before and after RbfA during the maturation of 16S rRNA. It has affinity for free ribosomal 30S subunits but not for 70S ribosomes.</text>
</comment>
<comment type="subunit">
    <text evidence="1">Binds ribosomal protein uS19.</text>
</comment>
<comment type="subcellular location">
    <subcellularLocation>
        <location evidence="1">Cytoplasm</location>
    </subcellularLocation>
</comment>
<comment type="domain">
    <text evidence="1">The PRC barrel domain binds ribosomal protein uS19.</text>
</comment>
<comment type="similarity">
    <text evidence="1">Belongs to the RimM family.</text>
</comment>
<protein>
    <recommendedName>
        <fullName evidence="1">Ribosome maturation factor RimM</fullName>
    </recommendedName>
</protein>
<gene>
    <name evidence="1" type="primary">rimM</name>
    <name type="ordered locus">Fjoh_1300</name>
</gene>
<proteinExistence type="inferred from homology"/>
<dbReference type="EMBL" id="CP000685">
    <property type="protein sequence ID" value="ABQ04332.1"/>
    <property type="molecule type" value="Genomic_DNA"/>
</dbReference>
<dbReference type="RefSeq" id="WP_012023381.1">
    <property type="nucleotide sequence ID" value="NZ_MUGZ01000003.1"/>
</dbReference>
<dbReference type="SMR" id="A5FKD8"/>
<dbReference type="STRING" id="376686.Fjoh_1300"/>
<dbReference type="KEGG" id="fjo:Fjoh_1300"/>
<dbReference type="eggNOG" id="COG0806">
    <property type="taxonomic scope" value="Bacteria"/>
</dbReference>
<dbReference type="HOGENOM" id="CLU_077636_4_1_10"/>
<dbReference type="OrthoDB" id="9810331at2"/>
<dbReference type="Proteomes" id="UP000006694">
    <property type="component" value="Chromosome"/>
</dbReference>
<dbReference type="GO" id="GO:0005737">
    <property type="term" value="C:cytoplasm"/>
    <property type="evidence" value="ECO:0007669"/>
    <property type="project" value="UniProtKB-SubCell"/>
</dbReference>
<dbReference type="GO" id="GO:0005840">
    <property type="term" value="C:ribosome"/>
    <property type="evidence" value="ECO:0007669"/>
    <property type="project" value="InterPro"/>
</dbReference>
<dbReference type="GO" id="GO:0043022">
    <property type="term" value="F:ribosome binding"/>
    <property type="evidence" value="ECO:0007669"/>
    <property type="project" value="InterPro"/>
</dbReference>
<dbReference type="GO" id="GO:0042274">
    <property type="term" value="P:ribosomal small subunit biogenesis"/>
    <property type="evidence" value="ECO:0007669"/>
    <property type="project" value="UniProtKB-UniRule"/>
</dbReference>
<dbReference type="GO" id="GO:0006364">
    <property type="term" value="P:rRNA processing"/>
    <property type="evidence" value="ECO:0007669"/>
    <property type="project" value="UniProtKB-UniRule"/>
</dbReference>
<dbReference type="Gene3D" id="2.30.30.240">
    <property type="entry name" value="PRC-barrel domain"/>
    <property type="match status" value="1"/>
</dbReference>
<dbReference type="Gene3D" id="2.40.30.60">
    <property type="entry name" value="RimM"/>
    <property type="match status" value="1"/>
</dbReference>
<dbReference type="HAMAP" id="MF_00014">
    <property type="entry name" value="Ribosome_mat_RimM"/>
    <property type="match status" value="1"/>
</dbReference>
<dbReference type="InterPro" id="IPR011033">
    <property type="entry name" value="PRC_barrel-like_sf"/>
</dbReference>
<dbReference type="InterPro" id="IPR056792">
    <property type="entry name" value="PRC_RimM"/>
</dbReference>
<dbReference type="InterPro" id="IPR011961">
    <property type="entry name" value="RimM"/>
</dbReference>
<dbReference type="InterPro" id="IPR002676">
    <property type="entry name" value="RimM_N"/>
</dbReference>
<dbReference type="InterPro" id="IPR036976">
    <property type="entry name" value="RimM_N_sf"/>
</dbReference>
<dbReference type="InterPro" id="IPR009000">
    <property type="entry name" value="Transl_B-barrel_sf"/>
</dbReference>
<dbReference type="NCBIfam" id="TIGR02273">
    <property type="entry name" value="16S_RimM"/>
    <property type="match status" value="1"/>
</dbReference>
<dbReference type="PANTHER" id="PTHR33692">
    <property type="entry name" value="RIBOSOME MATURATION FACTOR RIMM"/>
    <property type="match status" value="1"/>
</dbReference>
<dbReference type="PANTHER" id="PTHR33692:SF1">
    <property type="entry name" value="RIBOSOME MATURATION FACTOR RIMM"/>
    <property type="match status" value="1"/>
</dbReference>
<dbReference type="Pfam" id="PF24986">
    <property type="entry name" value="PRC_RimM"/>
    <property type="match status" value="1"/>
</dbReference>
<dbReference type="Pfam" id="PF01782">
    <property type="entry name" value="RimM"/>
    <property type="match status" value="1"/>
</dbReference>
<dbReference type="SUPFAM" id="SSF50346">
    <property type="entry name" value="PRC-barrel domain"/>
    <property type="match status" value="1"/>
</dbReference>
<dbReference type="SUPFAM" id="SSF50447">
    <property type="entry name" value="Translation proteins"/>
    <property type="match status" value="1"/>
</dbReference>
<feature type="chain" id="PRO_1000074028" description="Ribosome maturation factor RimM">
    <location>
        <begin position="1"/>
        <end position="174"/>
    </location>
</feature>
<feature type="domain" description="PRC barrel" evidence="1">
    <location>
        <begin position="97"/>
        <end position="173"/>
    </location>
</feature>
<reference key="1">
    <citation type="journal article" date="2009" name="Appl. Environ. Microbiol.">
        <title>Novel features of the polysaccharide-digesting gliding bacterium Flavobacterium johnsoniae as revealed by genome sequence analysis.</title>
        <authorList>
            <person name="McBride M.J."/>
            <person name="Xie G."/>
            <person name="Martens E.C."/>
            <person name="Lapidus A."/>
            <person name="Henrissat B."/>
            <person name="Rhodes R.G."/>
            <person name="Goltsman E."/>
            <person name="Wang W."/>
            <person name="Xu J."/>
            <person name="Hunnicutt D.W."/>
            <person name="Staroscik A.M."/>
            <person name="Hoover T.R."/>
            <person name="Cheng Y.Q."/>
            <person name="Stein J.L."/>
        </authorList>
    </citation>
    <scope>NUCLEOTIDE SEQUENCE [LARGE SCALE GENOMIC DNA]</scope>
    <source>
        <strain>ATCC 17061 / DSM 2064 / JCM 8514 / BCRC 14874 / CCUG 350202 / NBRC 14942 / NCIMB 11054 / UW101</strain>
    </source>
</reference>
<keyword id="KW-0143">Chaperone</keyword>
<keyword id="KW-0963">Cytoplasm</keyword>
<keyword id="KW-0690">Ribosome biogenesis</keyword>
<keyword id="KW-0698">rRNA processing</keyword>
<name>RIMM_FLAJ1</name>
<organism>
    <name type="scientific">Flavobacterium johnsoniae (strain ATCC 17061 / DSM 2064 / JCM 8514 / BCRC 14874 / CCUG 350202 / NBRC 14942 / NCIMB 11054 / UW101)</name>
    <name type="common">Cytophaga johnsonae</name>
    <dbReference type="NCBI Taxonomy" id="376686"/>
    <lineage>
        <taxon>Bacteria</taxon>
        <taxon>Pseudomonadati</taxon>
        <taxon>Bacteroidota</taxon>
        <taxon>Flavobacteriia</taxon>
        <taxon>Flavobacteriales</taxon>
        <taxon>Flavobacteriaceae</taxon>
        <taxon>Flavobacterium</taxon>
    </lineage>
</organism>
<evidence type="ECO:0000255" key="1">
    <source>
        <dbReference type="HAMAP-Rule" id="MF_00014"/>
    </source>
</evidence>